<dbReference type="EC" id="3.6.4.13"/>
<dbReference type="EMBL" id="CH933806">
    <property type="protein sequence ID" value="EDW15124.1"/>
    <property type="molecule type" value="Genomic_DNA"/>
</dbReference>
<dbReference type="SMR" id="B4K5R2"/>
<dbReference type="FunCoup" id="B4K5R2">
    <property type="interactions" value="170"/>
</dbReference>
<dbReference type="EnsemblMetazoa" id="FBtr0173674">
    <property type="protein sequence ID" value="FBpp0172166"/>
    <property type="gene ID" value="FBgn0145676"/>
</dbReference>
<dbReference type="EnsemblMetazoa" id="XM_001999627.4">
    <property type="protein sequence ID" value="XP_001999663.1"/>
    <property type="gene ID" value="LOC6573595"/>
</dbReference>
<dbReference type="GeneID" id="6573595"/>
<dbReference type="KEGG" id="dmo:Dmoj_GI22949"/>
<dbReference type="eggNOG" id="KOG0920">
    <property type="taxonomic scope" value="Eukaryota"/>
</dbReference>
<dbReference type="HOGENOM" id="CLU_002601_1_0_1"/>
<dbReference type="InParanoid" id="B4K5R2"/>
<dbReference type="OMA" id="QRSAYCS"/>
<dbReference type="OrthoDB" id="66977at2759"/>
<dbReference type="PhylomeDB" id="B4K5R2"/>
<dbReference type="Proteomes" id="UP000009192">
    <property type="component" value="Unassembled WGS sequence"/>
</dbReference>
<dbReference type="GO" id="GO:0005634">
    <property type="term" value="C:nucleus"/>
    <property type="evidence" value="ECO:0007669"/>
    <property type="project" value="EnsemblMetazoa"/>
</dbReference>
<dbReference type="GO" id="GO:0043186">
    <property type="term" value="C:P granule"/>
    <property type="evidence" value="ECO:0007669"/>
    <property type="project" value="EnsemblMetazoa"/>
</dbReference>
<dbReference type="GO" id="GO:0005524">
    <property type="term" value="F:ATP binding"/>
    <property type="evidence" value="ECO:0007669"/>
    <property type="project" value="UniProtKB-KW"/>
</dbReference>
<dbReference type="GO" id="GO:0016887">
    <property type="term" value="F:ATP hydrolysis activity"/>
    <property type="evidence" value="ECO:0007669"/>
    <property type="project" value="RHEA"/>
</dbReference>
<dbReference type="GO" id="GO:0003723">
    <property type="term" value="F:RNA binding"/>
    <property type="evidence" value="ECO:0007669"/>
    <property type="project" value="TreeGrafter"/>
</dbReference>
<dbReference type="GO" id="GO:0003724">
    <property type="term" value="F:RNA helicase activity"/>
    <property type="evidence" value="ECO:0007669"/>
    <property type="project" value="UniProtKB-EC"/>
</dbReference>
<dbReference type="GO" id="GO:0046843">
    <property type="term" value="P:dorsal appendage formation"/>
    <property type="evidence" value="ECO:0007669"/>
    <property type="project" value="EnsemblMetazoa"/>
</dbReference>
<dbReference type="GO" id="GO:0007294">
    <property type="term" value="P:germarium-derived oocyte fate determination"/>
    <property type="evidence" value="ECO:0007669"/>
    <property type="project" value="EnsemblMetazoa"/>
</dbReference>
<dbReference type="GO" id="GO:0098795">
    <property type="term" value="P:global gene silencing by mRNA cleavage"/>
    <property type="evidence" value="ECO:0007669"/>
    <property type="project" value="EnsemblMetazoa"/>
</dbReference>
<dbReference type="GO" id="GO:0031507">
    <property type="term" value="P:heterochromatin formation"/>
    <property type="evidence" value="ECO:0007669"/>
    <property type="project" value="EnsemblMetazoa"/>
</dbReference>
<dbReference type="GO" id="GO:0008298">
    <property type="term" value="P:intracellular mRNA localization"/>
    <property type="evidence" value="ECO:0007669"/>
    <property type="project" value="EnsemblMetazoa"/>
</dbReference>
<dbReference type="GO" id="GO:0007076">
    <property type="term" value="P:mitotic chromosome condensation"/>
    <property type="evidence" value="ECO:0007669"/>
    <property type="project" value="EnsemblMetazoa"/>
</dbReference>
<dbReference type="GO" id="GO:0030717">
    <property type="term" value="P:oocyte karyosome formation"/>
    <property type="evidence" value="ECO:0007669"/>
    <property type="project" value="EnsemblMetazoa"/>
</dbReference>
<dbReference type="GO" id="GO:0030720">
    <property type="term" value="P:oocyte localization involved in germarium-derived egg chamber formation"/>
    <property type="evidence" value="ECO:0007669"/>
    <property type="project" value="EnsemblMetazoa"/>
</dbReference>
<dbReference type="GO" id="GO:0001556">
    <property type="term" value="P:oocyte maturation"/>
    <property type="evidence" value="ECO:0007669"/>
    <property type="project" value="EnsemblMetazoa"/>
</dbReference>
<dbReference type="GO" id="GO:0009949">
    <property type="term" value="P:polarity specification of anterior/posterior axis"/>
    <property type="evidence" value="ECO:0007669"/>
    <property type="project" value="EnsemblMetazoa"/>
</dbReference>
<dbReference type="GO" id="GO:0009951">
    <property type="term" value="P:polarity specification of dorsal/ventral axis"/>
    <property type="evidence" value="ECO:0007669"/>
    <property type="project" value="EnsemblMetazoa"/>
</dbReference>
<dbReference type="GO" id="GO:0007317">
    <property type="term" value="P:regulation of pole plasm oskar mRNA localization"/>
    <property type="evidence" value="ECO:0007669"/>
    <property type="project" value="EnsemblMetazoa"/>
</dbReference>
<dbReference type="GO" id="GO:0140965">
    <property type="term" value="P:secondary piRNA processing"/>
    <property type="evidence" value="ECO:0007669"/>
    <property type="project" value="EnsemblMetazoa"/>
</dbReference>
<dbReference type="GO" id="GO:0007283">
    <property type="term" value="P:spermatogenesis"/>
    <property type="evidence" value="ECO:0007669"/>
    <property type="project" value="UniProtKB-KW"/>
</dbReference>
<dbReference type="GO" id="GO:0141009">
    <property type="term" value="P:transposable element silencing by piRNA-mediated mRNA destabilization"/>
    <property type="evidence" value="ECO:0007669"/>
    <property type="project" value="EnsemblMetazoa"/>
</dbReference>
<dbReference type="CDD" id="cd18791">
    <property type="entry name" value="SF2_C_RHA"/>
    <property type="match status" value="1"/>
</dbReference>
<dbReference type="FunFam" id="3.40.50.300:FF:001676">
    <property type="entry name" value="DExH-box ATP-dependent RNA helicase DExH7 chloroplastic"/>
    <property type="match status" value="1"/>
</dbReference>
<dbReference type="Gene3D" id="1.20.120.1080">
    <property type="match status" value="1"/>
</dbReference>
<dbReference type="Gene3D" id="2.30.30.140">
    <property type="match status" value="1"/>
</dbReference>
<dbReference type="Gene3D" id="2.40.50.90">
    <property type="match status" value="1"/>
</dbReference>
<dbReference type="Gene3D" id="3.40.50.300">
    <property type="entry name" value="P-loop containing nucleotide triphosphate hydrolases"/>
    <property type="match status" value="2"/>
</dbReference>
<dbReference type="InterPro" id="IPR011545">
    <property type="entry name" value="DEAD/DEAH_box_helicase_dom"/>
</dbReference>
<dbReference type="InterPro" id="IPR007502">
    <property type="entry name" value="Helicase-assoc_dom"/>
</dbReference>
<dbReference type="InterPro" id="IPR014001">
    <property type="entry name" value="Helicase_ATP-bd"/>
</dbReference>
<dbReference type="InterPro" id="IPR001650">
    <property type="entry name" value="Helicase_C-like"/>
</dbReference>
<dbReference type="InterPro" id="IPR027417">
    <property type="entry name" value="P-loop_NTPase"/>
</dbReference>
<dbReference type="InterPro" id="IPR035437">
    <property type="entry name" value="SNase_OB-fold_sf"/>
</dbReference>
<dbReference type="InterPro" id="IPR002999">
    <property type="entry name" value="Tudor"/>
</dbReference>
<dbReference type="InterPro" id="IPR013087">
    <property type="entry name" value="Znf_C2H2_type"/>
</dbReference>
<dbReference type="PANTHER" id="PTHR18934">
    <property type="entry name" value="ATP-DEPENDENT RNA HELICASE"/>
    <property type="match status" value="1"/>
</dbReference>
<dbReference type="PANTHER" id="PTHR18934:SF113">
    <property type="entry name" value="ATP-DEPENDENT RNA HELICASE TDRD9"/>
    <property type="match status" value="1"/>
</dbReference>
<dbReference type="Pfam" id="PF00270">
    <property type="entry name" value="DEAD"/>
    <property type="match status" value="1"/>
</dbReference>
<dbReference type="Pfam" id="PF21010">
    <property type="entry name" value="HA2_C"/>
    <property type="match status" value="1"/>
</dbReference>
<dbReference type="Pfam" id="PF00271">
    <property type="entry name" value="Helicase_C"/>
    <property type="match status" value="1"/>
</dbReference>
<dbReference type="Pfam" id="PF00567">
    <property type="entry name" value="TUDOR"/>
    <property type="match status" value="1"/>
</dbReference>
<dbReference type="SMART" id="SM00487">
    <property type="entry name" value="DEXDc"/>
    <property type="match status" value="1"/>
</dbReference>
<dbReference type="SMART" id="SM00847">
    <property type="entry name" value="HA2"/>
    <property type="match status" value="1"/>
</dbReference>
<dbReference type="SMART" id="SM00490">
    <property type="entry name" value="HELICc"/>
    <property type="match status" value="1"/>
</dbReference>
<dbReference type="SMART" id="SM00333">
    <property type="entry name" value="TUDOR"/>
    <property type="match status" value="1"/>
</dbReference>
<dbReference type="SUPFAM" id="SSF52540">
    <property type="entry name" value="P-loop containing nucleoside triphosphate hydrolases"/>
    <property type="match status" value="1"/>
</dbReference>
<dbReference type="SUPFAM" id="SSF63748">
    <property type="entry name" value="Tudor/PWWP/MBT"/>
    <property type="match status" value="1"/>
</dbReference>
<dbReference type="PROSITE" id="PS51192">
    <property type="entry name" value="HELICASE_ATP_BIND_1"/>
    <property type="match status" value="1"/>
</dbReference>
<dbReference type="PROSITE" id="PS51194">
    <property type="entry name" value="HELICASE_CTER"/>
    <property type="match status" value="1"/>
</dbReference>
<dbReference type="PROSITE" id="PS50304">
    <property type="entry name" value="TUDOR"/>
    <property type="match status" value="1"/>
</dbReference>
<feature type="chain" id="PRO_0000391917" description="Probable ATP-dependent RNA helicase spindle-E">
    <location>
        <begin position="1"/>
        <end position="1431"/>
    </location>
</feature>
<feature type="domain" description="Helicase ATP-binding" evidence="3">
    <location>
        <begin position="127"/>
        <end position="294"/>
    </location>
</feature>
<feature type="domain" description="Helicase C-terminal" evidence="4">
    <location>
        <begin position="354"/>
        <end position="526"/>
    </location>
</feature>
<feature type="domain" description="Tudor" evidence="2">
    <location>
        <begin position="937"/>
        <end position="1000"/>
    </location>
</feature>
<feature type="short sequence motif" description="DEAH box">
    <location>
        <begin position="240"/>
        <end position="243"/>
    </location>
</feature>
<feature type="binding site" evidence="3">
    <location>
        <begin position="140"/>
        <end position="147"/>
    </location>
    <ligand>
        <name>ATP</name>
        <dbReference type="ChEBI" id="CHEBI:30616"/>
    </ligand>
</feature>
<accession>B4K5R2</accession>
<proteinExistence type="inferred from homology"/>
<sequence>MDSDLMDFFDFSKQFSRAPAPKGYITGDPTAFATETIDSKPIKRELIGKDYVHEVVEKEKHLMKKLADGYNTSKNRRTLDELDSDDDEVLMKELPSVRSDEEYYKKYRFDLNRNKNLPIYEQREDILAAIRENPVVILKGETGCGKTTQVPQYILDEAFKRREFCNIVVTQPRRIAAISIANRVCHERKWQPGTVCSYQVGLHRQSNLEDTRLLYCTTGVLLNNLVRVKTLTQYTHIILDEVHERDQDMDFLLLVVRRLLALNSRHVKVILMSATIDTREFSKYFAMSSSLPPVVTASHGRKFPLVKFYRDQLKNIHWKDEPQRTTPGIGPEGYSDAIKLLLVIDNMERKADNQSQQSYEEAKRTGAVLIFLPGIHEIDTMAEHIGRIVDENPNFKISIVRCHSLMSPDSQEEVFLPPPLGHRKVILTTNISESSITVPDVSYVIDFCLTKVLHTDTASNFSSLRLEWASKVNCRQRAGRVGRLRSGRVYRMVTKDFYMNHMNEFGIPEMLRSPLQNSVLKAKELEMGNPSEILALAMSPPNLSDIQNTVLLLKEVGALYTTVDGVYEELDGDLSFWGKIMSKFPLDVRLSRLIILGYVFNCLDEAIVIAAGMTVRSLYVTGSRGQMNEAFWMHYIFADGSGSDMIGIWRVYRIYLNMCQDRMLKESAQQWARRFNVNLRSLKEMHLMVQDLRQRCASLNIQPLPYGACHMWDDREKSIILKVIIAGAFYPNYFMRSNKANADYDRSLFQTICGNDPCRTVYFTNFEPRYMGELYTRRIKELFLEAKIPPENIDVTFQHGSEKVFVTFKPDDEDIDTTKVVQVPGRVMTEVYKAVRMRLENQNRPLRVMDQNSAFKYVEQNRIGVISDCTWVPPSNQWPVELLTLPSVFDKTIFGLITHVANCGKFYFQPQALAERIASMSEIFNRSLELSCYVQNAKAVTKGLQLLAKRGNLYQRAVVLKVETQINGYPRFRVRFIDYGDVAVVPIDKLRLMSPQLKRDFERLPPRMFECRLALVQPSSVASSYNQWPQHANEMLISVAKSGRVELEIYSLVNNVAAVLIHTRGGVLNDMLVDRQLARRADEDYMSRKDHDLRLRKQETKRNVSITDQRLINEEYLRFAQLPKDTDLEPPPLNKCNLSIRLKGPYSPLEASLNSLLRIGMYKSVYIDKESVNSVLLDSDPQDRHDQMVVAASVTEAFDNLTVRGTTLMPNIHGFGALMAMLFCPTMQIKCNKDRTKYVSILAGLGYNPDTMQPHFEEHDMVINLDVAILKDDIRIINQMRYNIDSMFYNFDVNEMPSVGTEDRVVIFNQLRSLLIRLLGKDRSFIERHVSNFEYLWEDMSDLEPPSEPYGKRAIFPMHSSYDFESENMGNLLSLQANCKELYSWRNFEGTMQPMKCRLCNDTLESVAELRLHLLTQLHRDREKQVGWKQN</sequence>
<name>SPNE_DROMO</name>
<comment type="function">
    <text evidence="1">Probable ATP-binding RNA helicase which plays a central role during spermatogenesis and oogenesis by repressing transposable elements and preventing their mobilization, which is essential for the germline integrity. Acts via the piRNA metabolic process, which mediates the repression of transposable elements during meiosis by forming complexes composed of piRNAs and Piwi and govern the methylation and subsequent repression of transposons. Involved in the repression of LTR retrotransposon copia. Also involved in telomere regulation by repressing specialized telomeric retroelements HeT-A, TAHRE, and TART; Drosophila telomeres being maintained by transposition of specialized telomeric retroelements. Involved in telomeric trans-silencing, a repression mechanism by which a transposon or a transgene inserted in subtelomeric heterochromatin has the capacity to repress in trans in the female germline, a homologous transposon, or transgene located in euchromatin. Involved in the repression of testis-expressed Stellate genes by the homologous Su(Ste) repeats. Required for anteroposterior and dorsoventral axis formation during oogenesis (By similarity).</text>
</comment>
<comment type="catalytic activity">
    <reaction>
        <text>ATP + H2O = ADP + phosphate + H(+)</text>
        <dbReference type="Rhea" id="RHEA:13065"/>
        <dbReference type="ChEBI" id="CHEBI:15377"/>
        <dbReference type="ChEBI" id="CHEBI:15378"/>
        <dbReference type="ChEBI" id="CHEBI:30616"/>
        <dbReference type="ChEBI" id="CHEBI:43474"/>
        <dbReference type="ChEBI" id="CHEBI:456216"/>
        <dbReference type="EC" id="3.6.4.13"/>
    </reaction>
</comment>
<comment type="subcellular location">
    <subcellularLocation>
        <location evidence="1">Cytoplasm</location>
    </subcellularLocation>
    <text evidence="1">Component of the nuage, also named P granule, a germ-cell-specific organelle required to repress transposon during meiosis.</text>
</comment>
<comment type="similarity">
    <text evidence="5">Belongs to the DEAD box helicase family. DEAH subfamily.</text>
</comment>
<protein>
    <recommendedName>
        <fullName>Probable ATP-dependent RNA helicase spindle-E</fullName>
        <ecNumber>3.6.4.13</ecNumber>
    </recommendedName>
    <alternativeName>
        <fullName>Homeless</fullName>
    </alternativeName>
</protein>
<evidence type="ECO:0000250" key="1"/>
<evidence type="ECO:0000255" key="2">
    <source>
        <dbReference type="PROSITE-ProRule" id="PRU00211"/>
    </source>
</evidence>
<evidence type="ECO:0000255" key="3">
    <source>
        <dbReference type="PROSITE-ProRule" id="PRU00541"/>
    </source>
</evidence>
<evidence type="ECO:0000255" key="4">
    <source>
        <dbReference type="PROSITE-ProRule" id="PRU00542"/>
    </source>
</evidence>
<evidence type="ECO:0000305" key="5"/>
<organism>
    <name type="scientific">Drosophila mojavensis</name>
    <name type="common">Fruit fly</name>
    <dbReference type="NCBI Taxonomy" id="7230"/>
    <lineage>
        <taxon>Eukaryota</taxon>
        <taxon>Metazoa</taxon>
        <taxon>Ecdysozoa</taxon>
        <taxon>Arthropoda</taxon>
        <taxon>Hexapoda</taxon>
        <taxon>Insecta</taxon>
        <taxon>Pterygota</taxon>
        <taxon>Neoptera</taxon>
        <taxon>Endopterygota</taxon>
        <taxon>Diptera</taxon>
        <taxon>Brachycera</taxon>
        <taxon>Muscomorpha</taxon>
        <taxon>Ephydroidea</taxon>
        <taxon>Drosophilidae</taxon>
        <taxon>Drosophila</taxon>
    </lineage>
</organism>
<gene>
    <name type="primary">spn-E</name>
    <name type="synonym">hls</name>
    <name type="ORF">GI22949</name>
</gene>
<reference key="1">
    <citation type="journal article" date="2007" name="Nature">
        <title>Evolution of genes and genomes on the Drosophila phylogeny.</title>
        <authorList>
            <consortium name="Drosophila 12 genomes consortium"/>
        </authorList>
    </citation>
    <scope>NUCLEOTIDE SEQUENCE [LARGE SCALE GENOMIC DNA]</scope>
    <source>
        <strain>Tucson 15081-1352.22</strain>
    </source>
</reference>
<keyword id="KW-0067">ATP-binding</keyword>
<keyword id="KW-0963">Cytoplasm</keyword>
<keyword id="KW-0217">Developmental protein</keyword>
<keyword id="KW-0221">Differentiation</keyword>
<keyword id="KW-0347">Helicase</keyword>
<keyword id="KW-0378">Hydrolase</keyword>
<keyword id="KW-0469">Meiosis</keyword>
<keyword id="KW-0547">Nucleotide-binding</keyword>
<keyword id="KW-0896">Oogenesis</keyword>
<keyword id="KW-1185">Reference proteome</keyword>
<keyword id="KW-0943">RNA-mediated gene silencing</keyword>
<keyword id="KW-0744">Spermatogenesis</keyword>